<evidence type="ECO:0000250" key="1">
    <source>
        <dbReference type="UniProtKB" id="P45446"/>
    </source>
</evidence>
<evidence type="ECO:0000250" key="2">
    <source>
        <dbReference type="UniProtKB" id="Q92753"/>
    </source>
</evidence>
<evidence type="ECO:0000255" key="3">
    <source>
        <dbReference type="PROSITE-ProRule" id="PRU00407"/>
    </source>
</evidence>
<evidence type="ECO:0000255" key="4">
    <source>
        <dbReference type="PROSITE-ProRule" id="PRU01189"/>
    </source>
</evidence>
<evidence type="ECO:0000256" key="5">
    <source>
        <dbReference type="SAM" id="MobiDB-lite"/>
    </source>
</evidence>
<evidence type="ECO:0000269" key="6">
    <source>
    </source>
</evidence>
<evidence type="ECO:0000269" key="7">
    <source>
    </source>
</evidence>
<evidence type="ECO:0000269" key="8">
    <source>
    </source>
</evidence>
<evidence type="ECO:0000269" key="9">
    <source>
    </source>
</evidence>
<evidence type="ECO:0000269" key="10">
    <source>
    </source>
</evidence>
<evidence type="ECO:0000269" key="11">
    <source>
    </source>
</evidence>
<evidence type="ECO:0000269" key="12">
    <source>
    </source>
</evidence>
<evidence type="ECO:0000303" key="13">
    <source>
    </source>
</evidence>
<evidence type="ECO:0000303" key="14">
    <source ref="2"/>
</evidence>
<evidence type="ECO:0000305" key="15"/>
<organism>
    <name type="scientific">Mus musculus</name>
    <name type="common">Mouse</name>
    <dbReference type="NCBI Taxonomy" id="10090"/>
    <lineage>
        <taxon>Eukaryota</taxon>
        <taxon>Metazoa</taxon>
        <taxon>Chordata</taxon>
        <taxon>Craniata</taxon>
        <taxon>Vertebrata</taxon>
        <taxon>Euteleostomi</taxon>
        <taxon>Mammalia</taxon>
        <taxon>Eutheria</taxon>
        <taxon>Euarchontoglires</taxon>
        <taxon>Glires</taxon>
        <taxon>Rodentia</taxon>
        <taxon>Myomorpha</taxon>
        <taxon>Muroidea</taxon>
        <taxon>Muridae</taxon>
        <taxon>Murinae</taxon>
        <taxon>Mus</taxon>
        <taxon>Mus</taxon>
    </lineage>
</organism>
<keyword id="KW-0010">Activator</keyword>
<keyword id="KW-0877">Alternative promoter usage</keyword>
<keyword id="KW-0090">Biological rhythms</keyword>
<keyword id="KW-0217">Developmental protein</keyword>
<keyword id="KW-0238">DNA-binding</keyword>
<keyword id="KW-0479">Metal-binding</keyword>
<keyword id="KW-0539">Nucleus</keyword>
<keyword id="KW-0675">Receptor</keyword>
<keyword id="KW-1185">Reference proteome</keyword>
<keyword id="KW-0716">Sensory transduction</keyword>
<keyword id="KW-0804">Transcription</keyword>
<keyword id="KW-0805">Transcription regulation</keyword>
<keyword id="KW-0844">Vision</keyword>
<keyword id="KW-0862">Zinc</keyword>
<keyword id="KW-0863">Zinc-finger</keyword>
<feature type="chain" id="PRO_0000053515" description="Nuclear receptor ROR-beta">
    <location>
        <begin position="1"/>
        <end position="470"/>
    </location>
</feature>
<feature type="domain" description="NR LBD" evidence="4">
    <location>
        <begin position="222"/>
        <end position="460"/>
    </location>
</feature>
<feature type="DNA-binding region" description="Nuclear receptor" evidence="3">
    <location>
        <begin position="18"/>
        <end position="93"/>
    </location>
</feature>
<feature type="zinc finger region" description="NR C4-type" evidence="3">
    <location>
        <begin position="21"/>
        <end position="41"/>
    </location>
</feature>
<feature type="zinc finger region" description="NR C4-type" evidence="3">
    <location>
        <begin position="57"/>
        <end position="81"/>
    </location>
</feature>
<feature type="region of interest" description="Disordered" evidence="5">
    <location>
        <begin position="104"/>
        <end position="127"/>
    </location>
</feature>
<feature type="short sequence motif" description="AF-2">
    <location>
        <begin position="456"/>
        <end position="461"/>
    </location>
</feature>
<feature type="compositionally biased region" description="Basic and acidic residues" evidence="5">
    <location>
        <begin position="104"/>
        <end position="117"/>
    </location>
</feature>
<feature type="splice variant" id="VSP_022576" description="In isoform 1." evidence="13 14">
    <original>MCENQPKTKADGT</original>
    <variation>MR</variation>
    <location>
        <begin position="1"/>
        <end position="13"/>
    </location>
</feature>
<feature type="sequence conflict" description="In Ref. 2; BAE93688." evidence="15" ref="2">
    <original>E</original>
    <variation>G</variation>
    <location>
        <position position="107"/>
    </location>
</feature>
<feature type="sequence conflict" description="In Ref. 2; BAE93688." evidence="15" ref="2">
    <original>M</original>
    <variation>L</variation>
    <location>
        <position position="220"/>
    </location>
</feature>
<feature type="sequence conflict" description="In Ref. 2; BAE93688." evidence="15" ref="2">
    <original>Q</original>
    <variation>H</variation>
    <location>
        <position position="247"/>
    </location>
</feature>
<accession>Q8R1B8</accession>
<accession>Q0PQZ2</accession>
<accession>Q0PQZ3</accession>
<accession>Q1MVR9</accession>
<gene>
    <name type="primary">Rorb</name>
    <name type="synonym">Nr1f2</name>
</gene>
<dbReference type="EMBL" id="BC024842">
    <property type="protein sequence ID" value="AAH24842.2"/>
    <property type="status" value="ALT_SEQ"/>
    <property type="molecule type" value="mRNA"/>
</dbReference>
<dbReference type="EMBL" id="BC058269">
    <property type="protein sequence ID" value="AAH58269.1"/>
    <property type="status" value="ALT_SEQ"/>
    <property type="molecule type" value="mRNA"/>
</dbReference>
<dbReference type="EMBL" id="DQ779923">
    <property type="protein sequence ID" value="ABG77269.1"/>
    <property type="molecule type" value="mRNA"/>
</dbReference>
<dbReference type="EMBL" id="DQ779924">
    <property type="protein sequence ID" value="ABG77270.1"/>
    <property type="molecule type" value="mRNA"/>
</dbReference>
<dbReference type="EMBL" id="AB258405">
    <property type="protein sequence ID" value="BAE93688.1"/>
    <property type="molecule type" value="mRNA"/>
</dbReference>
<dbReference type="CCDS" id="CCDS37932.1">
    <molecule id="Q8R1B8-1"/>
</dbReference>
<dbReference type="CCDS" id="CCDS37933.1">
    <molecule id="Q8R1B8-2"/>
</dbReference>
<dbReference type="RefSeq" id="NP_001036819.1">
    <molecule id="Q8R1B8-1"/>
    <property type="nucleotide sequence ID" value="NM_001043354.2"/>
</dbReference>
<dbReference type="RefSeq" id="NP_001276850.1">
    <property type="nucleotide sequence ID" value="NM_001289921.1"/>
</dbReference>
<dbReference type="RefSeq" id="NP_666207.3">
    <molecule id="Q8R1B8-2"/>
    <property type="nucleotide sequence ID" value="NM_146095.4"/>
</dbReference>
<dbReference type="SMR" id="Q8R1B8"/>
<dbReference type="BioGRID" id="230457">
    <property type="interactions" value="8"/>
</dbReference>
<dbReference type="FunCoup" id="Q8R1B8">
    <property type="interactions" value="1889"/>
</dbReference>
<dbReference type="IntAct" id="Q8R1B8">
    <property type="interactions" value="5"/>
</dbReference>
<dbReference type="STRING" id="10090.ENSMUSP00000047597"/>
<dbReference type="GlyGen" id="Q8R1B8">
    <property type="glycosylation" value="1 site, 1 O-linked glycan (1 site)"/>
</dbReference>
<dbReference type="iPTMnet" id="Q8R1B8"/>
<dbReference type="PhosphoSitePlus" id="Q8R1B8"/>
<dbReference type="PaxDb" id="10090-ENSMUSP00000047597"/>
<dbReference type="ProteomicsDB" id="301593">
    <molecule id="Q8R1B8-2"/>
</dbReference>
<dbReference type="ProteomicsDB" id="301594">
    <molecule id="Q8R1B8-1"/>
</dbReference>
<dbReference type="Antibodypedia" id="1699">
    <property type="antibodies" value="419 antibodies from 32 providers"/>
</dbReference>
<dbReference type="DNASU" id="225998"/>
<dbReference type="Ensembl" id="ENSMUST00000040153.15">
    <molecule id="Q8R1B8-2"/>
    <property type="protein sequence ID" value="ENSMUSP00000047597.9"/>
    <property type="gene ID" value="ENSMUSG00000036192.16"/>
</dbReference>
<dbReference type="Ensembl" id="ENSMUST00000112832.8">
    <molecule id="Q8R1B8-1"/>
    <property type="protein sequence ID" value="ENSMUSP00000108451.2"/>
    <property type="gene ID" value="ENSMUSG00000036192.16"/>
</dbReference>
<dbReference type="GeneID" id="225998"/>
<dbReference type="KEGG" id="mmu:225998"/>
<dbReference type="UCSC" id="uc008gyc.2">
    <molecule id="Q8R1B8-2"/>
    <property type="organism name" value="mouse"/>
</dbReference>
<dbReference type="UCSC" id="uc008gye.2">
    <molecule id="Q8R1B8-1"/>
    <property type="organism name" value="mouse"/>
</dbReference>
<dbReference type="AGR" id="MGI:1343464"/>
<dbReference type="CTD" id="6096"/>
<dbReference type="MGI" id="MGI:1343464">
    <property type="gene designation" value="Rorb"/>
</dbReference>
<dbReference type="VEuPathDB" id="HostDB:ENSMUSG00000036192"/>
<dbReference type="eggNOG" id="KOG4216">
    <property type="taxonomic scope" value="Eukaryota"/>
</dbReference>
<dbReference type="GeneTree" id="ENSGT00940000157708"/>
<dbReference type="HOGENOM" id="CLU_007368_2_0_1"/>
<dbReference type="InParanoid" id="Q8R1B8"/>
<dbReference type="OMA" id="TIACKIC"/>
<dbReference type="OrthoDB" id="8832025at2759"/>
<dbReference type="PhylomeDB" id="Q8R1B8"/>
<dbReference type="TreeFam" id="TF319910"/>
<dbReference type="Reactome" id="R-MMU-383280">
    <property type="pathway name" value="Nuclear Receptor transcription pathway"/>
</dbReference>
<dbReference type="BioGRID-ORCS" id="225998">
    <property type="hits" value="2 hits in 77 CRISPR screens"/>
</dbReference>
<dbReference type="ChiTaRS" id="Rorb">
    <property type="organism name" value="mouse"/>
</dbReference>
<dbReference type="PRO" id="PR:Q8R1B8"/>
<dbReference type="Proteomes" id="UP000000589">
    <property type="component" value="Chromosome 19"/>
</dbReference>
<dbReference type="RNAct" id="Q8R1B8">
    <property type="molecule type" value="protein"/>
</dbReference>
<dbReference type="Bgee" id="ENSMUSG00000036192">
    <property type="expression patterns" value="Expressed in cortical layer IV and 127 other cell types or tissues"/>
</dbReference>
<dbReference type="ExpressionAtlas" id="Q8R1B8">
    <property type="expression patterns" value="baseline and differential"/>
</dbReference>
<dbReference type="GO" id="GO:0005654">
    <property type="term" value="C:nucleoplasm"/>
    <property type="evidence" value="ECO:0000250"/>
    <property type="project" value="UniProtKB"/>
</dbReference>
<dbReference type="GO" id="GO:0005634">
    <property type="term" value="C:nucleus"/>
    <property type="evidence" value="ECO:0000314"/>
    <property type="project" value="UniProtKB"/>
</dbReference>
<dbReference type="GO" id="GO:0001228">
    <property type="term" value="F:DNA-binding transcription activator activity, RNA polymerase II-specific"/>
    <property type="evidence" value="ECO:0000314"/>
    <property type="project" value="NTNU_SB"/>
</dbReference>
<dbReference type="GO" id="GO:0003700">
    <property type="term" value="F:DNA-binding transcription factor activity"/>
    <property type="evidence" value="ECO:0000314"/>
    <property type="project" value="UniProtKB"/>
</dbReference>
<dbReference type="GO" id="GO:0000981">
    <property type="term" value="F:DNA-binding transcription factor activity, RNA polymerase II-specific"/>
    <property type="evidence" value="ECO:0000314"/>
    <property type="project" value="GO_Central"/>
</dbReference>
<dbReference type="GO" id="GO:0004879">
    <property type="term" value="F:nuclear receptor activity"/>
    <property type="evidence" value="ECO:0007669"/>
    <property type="project" value="InterPro"/>
</dbReference>
<dbReference type="GO" id="GO:0000978">
    <property type="term" value="F:RNA polymerase II cis-regulatory region sequence-specific DNA binding"/>
    <property type="evidence" value="ECO:0000314"/>
    <property type="project" value="NTNU_SB"/>
</dbReference>
<dbReference type="GO" id="GO:0043565">
    <property type="term" value="F:sequence-specific DNA binding"/>
    <property type="evidence" value="ECO:0000314"/>
    <property type="project" value="UniProtKB"/>
</dbReference>
<dbReference type="GO" id="GO:0008270">
    <property type="term" value="F:zinc ion binding"/>
    <property type="evidence" value="ECO:0007669"/>
    <property type="project" value="UniProtKB-KW"/>
</dbReference>
<dbReference type="GO" id="GO:0035881">
    <property type="term" value="P:amacrine cell differentiation"/>
    <property type="evidence" value="ECO:0000315"/>
    <property type="project" value="UniProtKB"/>
</dbReference>
<dbReference type="GO" id="GO:0071300">
    <property type="term" value="P:cellular response to retinoic acid"/>
    <property type="evidence" value="ECO:0000250"/>
    <property type="project" value="UniProtKB"/>
</dbReference>
<dbReference type="GO" id="GO:0042462">
    <property type="term" value="P:eye photoreceptor cell development"/>
    <property type="evidence" value="ECO:0000315"/>
    <property type="project" value="UniProtKB"/>
</dbReference>
<dbReference type="GO" id="GO:0045892">
    <property type="term" value="P:negative regulation of DNA-templated transcription"/>
    <property type="evidence" value="ECO:0000250"/>
    <property type="project" value="UniProtKB"/>
</dbReference>
<dbReference type="GO" id="GO:0045668">
    <property type="term" value="P:negative regulation of osteoblast differentiation"/>
    <property type="evidence" value="ECO:0000314"/>
    <property type="project" value="UniProtKB"/>
</dbReference>
<dbReference type="GO" id="GO:0045893">
    <property type="term" value="P:positive regulation of DNA-templated transcription"/>
    <property type="evidence" value="ECO:0000314"/>
    <property type="project" value="UniProtKB"/>
</dbReference>
<dbReference type="GO" id="GO:0045944">
    <property type="term" value="P:positive regulation of transcription by RNA polymerase II"/>
    <property type="evidence" value="ECO:0000314"/>
    <property type="project" value="NTNU_SB"/>
</dbReference>
<dbReference type="GO" id="GO:0042752">
    <property type="term" value="P:regulation of circadian rhythm"/>
    <property type="evidence" value="ECO:0000315"/>
    <property type="project" value="UniProtKB"/>
</dbReference>
<dbReference type="GO" id="GO:0060041">
    <property type="term" value="P:retina development in camera-type eye"/>
    <property type="evidence" value="ECO:0000315"/>
    <property type="project" value="UniProtKB"/>
</dbReference>
<dbReference type="GO" id="GO:0046549">
    <property type="term" value="P:retinal cone cell development"/>
    <property type="evidence" value="ECO:0000314"/>
    <property type="project" value="UniProtKB"/>
</dbReference>
<dbReference type="GO" id="GO:0046548">
    <property type="term" value="P:retinal rod cell development"/>
    <property type="evidence" value="ECO:0000315"/>
    <property type="project" value="UniProtKB"/>
</dbReference>
<dbReference type="GO" id="GO:0060221">
    <property type="term" value="P:retinal rod cell differentiation"/>
    <property type="evidence" value="ECO:0000315"/>
    <property type="project" value="MGI"/>
</dbReference>
<dbReference type="GO" id="GO:0048511">
    <property type="term" value="P:rhythmic process"/>
    <property type="evidence" value="ECO:0007669"/>
    <property type="project" value="UniProtKB-KW"/>
</dbReference>
<dbReference type="GO" id="GO:0007601">
    <property type="term" value="P:visual perception"/>
    <property type="evidence" value="ECO:0007669"/>
    <property type="project" value="UniProtKB-KW"/>
</dbReference>
<dbReference type="CDD" id="cd06968">
    <property type="entry name" value="NR_DBD_ROR"/>
    <property type="match status" value="1"/>
</dbReference>
<dbReference type="CDD" id="cd06939">
    <property type="entry name" value="NR_LBD_ROR_like"/>
    <property type="match status" value="1"/>
</dbReference>
<dbReference type="FunFam" id="1.10.565.10:FF:000005">
    <property type="entry name" value="Nuclear orphan receptor ROR-beta"/>
    <property type="match status" value="1"/>
</dbReference>
<dbReference type="FunFam" id="3.30.50.10:FF:000003">
    <property type="entry name" value="Nuclear orphan receptor ROR-beta"/>
    <property type="match status" value="1"/>
</dbReference>
<dbReference type="Gene3D" id="3.30.50.10">
    <property type="entry name" value="Erythroid Transcription Factor GATA-1, subunit A"/>
    <property type="match status" value="1"/>
</dbReference>
<dbReference type="Gene3D" id="1.10.565.10">
    <property type="entry name" value="Retinoid X Receptor"/>
    <property type="match status" value="1"/>
</dbReference>
<dbReference type="InterPro" id="IPR035500">
    <property type="entry name" value="NHR-like_dom_sf"/>
</dbReference>
<dbReference type="InterPro" id="IPR044101">
    <property type="entry name" value="NR_DBD_ROR"/>
</dbReference>
<dbReference type="InterPro" id="IPR000536">
    <property type="entry name" value="Nucl_hrmn_rcpt_lig-bd"/>
</dbReference>
<dbReference type="InterPro" id="IPR001723">
    <property type="entry name" value="Nuclear_hrmn_rcpt"/>
</dbReference>
<dbReference type="InterPro" id="IPR003079">
    <property type="entry name" value="ROR_rcpt"/>
</dbReference>
<dbReference type="InterPro" id="IPR001628">
    <property type="entry name" value="Znf_hrmn_rcpt"/>
</dbReference>
<dbReference type="InterPro" id="IPR013088">
    <property type="entry name" value="Znf_NHR/GATA"/>
</dbReference>
<dbReference type="PANTHER" id="PTHR45805">
    <property type="entry name" value="NUCLEAR HORMONE RECEPTOR HR3-RELATED"/>
    <property type="match status" value="1"/>
</dbReference>
<dbReference type="PANTHER" id="PTHR45805:SF6">
    <property type="entry name" value="NUCLEAR RECEPTOR ROR-BETA"/>
    <property type="match status" value="1"/>
</dbReference>
<dbReference type="Pfam" id="PF00104">
    <property type="entry name" value="Hormone_recep"/>
    <property type="match status" value="1"/>
</dbReference>
<dbReference type="Pfam" id="PF00105">
    <property type="entry name" value="zf-C4"/>
    <property type="match status" value="1"/>
</dbReference>
<dbReference type="PRINTS" id="PR01293">
    <property type="entry name" value="RORNUCRECPTR"/>
</dbReference>
<dbReference type="PRINTS" id="PR00398">
    <property type="entry name" value="STRDHORMONER"/>
</dbReference>
<dbReference type="PRINTS" id="PR00047">
    <property type="entry name" value="STROIDFINGER"/>
</dbReference>
<dbReference type="SMART" id="SM00430">
    <property type="entry name" value="HOLI"/>
    <property type="match status" value="1"/>
</dbReference>
<dbReference type="SMART" id="SM00399">
    <property type="entry name" value="ZnF_C4"/>
    <property type="match status" value="1"/>
</dbReference>
<dbReference type="SUPFAM" id="SSF57716">
    <property type="entry name" value="Glucocorticoid receptor-like (DNA-binding domain)"/>
    <property type="match status" value="1"/>
</dbReference>
<dbReference type="SUPFAM" id="SSF48508">
    <property type="entry name" value="Nuclear receptor ligand-binding domain"/>
    <property type="match status" value="1"/>
</dbReference>
<dbReference type="PROSITE" id="PS51843">
    <property type="entry name" value="NR_LBD"/>
    <property type="match status" value="1"/>
</dbReference>
<dbReference type="PROSITE" id="PS00031">
    <property type="entry name" value="NUCLEAR_REC_DBD_1"/>
    <property type="match status" value="1"/>
</dbReference>
<dbReference type="PROSITE" id="PS51030">
    <property type="entry name" value="NUCLEAR_REC_DBD_2"/>
    <property type="match status" value="1"/>
</dbReference>
<comment type="function">
    <text evidence="1">Nuclear receptor that binds DNA as a monomer to ROR response elements (RORE) containing a single core motif half-site 5'-AGGTCA-3' preceded by a short A-T-rich sequence. Considered to have intrinsic transcriptional activity, have some natural ligands such as all-trans retinoic acid (ATRA) and other retinoids which act as inverse agonists repressing the transcriptional activity. Required for normal postnatal development of rod and cone photoreceptor cells. Modulates rod photoreceptors differentiation at least by inducing the transcription factor NRL-mediated pathway. In cone photoreceptor cells, regulates transcription of OPN1SW. Involved in the regulation of the period length and stability of the circadian rhythm. May control cytoarchitectural patterning of neocortical neurons during development. May act in a dose-dependent manner to regulate barrel formation upon innervation of layer IV neurons by thalamocortical axons. May play a role in the suppression of osteoblastic differentiation through the inhibition of RUNX2 transcriptional activity.</text>
</comment>
<comment type="function">
    <text evidence="11">Isoform 1 is critical for hindlimb motor control and for the differentiation of amacrine and horizontal cells in the retina. Regulates the expression of PTF1A synergistically with FOXN4.</text>
</comment>
<comment type="subunit">
    <text evidence="1">Monomer. Interacts with CRX.</text>
</comment>
<comment type="subcellular location">
    <subcellularLocation>
        <location evidence="6">Nucleus</location>
    </subcellularLocation>
    <subcellularLocation>
        <location evidence="2">Nucleus</location>
        <location evidence="2">Nucleoplasm</location>
    </subcellularLocation>
</comment>
<comment type="alternative products">
    <event type="alternative promoter"/>
    <isoform>
        <id>Q8R1B8-2</id>
        <name>2</name>
        <sequence type="displayed"/>
    </isoform>
    <isoform>
        <id>Q8R1B8-1</id>
        <name>1</name>
        <sequence type="described" ref="VSP_022576"/>
    </isoform>
</comment>
<comment type="tissue specificity">
    <text evidence="6 9 10 11 12">Expressed in inner and outer neuroblastic layer as well as in the ganglion cell layer of the developing retina. Expressed in bone marrow osteoprogenitor cells.</text>
</comment>
<comment type="developmental stage">
    <text evidence="6 9">Expressed in the lateral cortical plate at 18.5 dpc and only very weakly expressed by cortical neurons at 15.5 dpc. Expression progressively increases in layer IV neurons of the prospective somatosensory, visual and auditory cortices. At much lower levels, also expressed by scattered neurons in layer V in these areas. By P4, expression is striking in the whisker barrel cortex of the somatosensory cortex. During retinal development, isoform 1 is broadly expressed in between 13.5 dpc and P5 then declines and is maintained at lower levels into adulthood. At 15.5 dpc, is expressed in the immature cochlea, brainstem, spinal cord and cerebral cortex. Isoform 2 is first detected at low levels at late embryonic stages (18.5 dpc), the expression highly increases during the first postnatal week and is maintained during the adulthood.</text>
</comment>
<comment type="induction">
    <text evidence="10">Induced by aging in bone marrow.</text>
</comment>
<comment type="domain">
    <text evidence="1">AF-2 (activation function-2) motif is required for recruiting coregulators containing the LXXLL motif, such as NCOA1, and control the transactivational activity.</text>
</comment>
<comment type="disruption phenotype">
    <text evidence="6 7 8 11 12">Mice are blind, show juvenile ataxia, duck gait, hind paw clasping reflex as well as delayed onset of male fertility. They suffer a degeneration of the retina during postnatal development with severe defects in photoreceptor cell morphology. Mice display reduced anxiety and learned helplessness-related behaviors. They also show a significant increase of the circadian period. Knockouts for isoform 1 display duck gait and lack amacrine and horizontal cells with an excess of ganglion cells in the retina (PubMed:23652001).</text>
</comment>
<comment type="similarity">
    <text evidence="15">Belongs to the nuclear hormone receptor family. NR1 subfamily.</text>
</comment>
<comment type="sequence caution" evidence="15">
    <conflict type="miscellaneous discrepancy">
        <sequence resource="EMBL-CDS" id="AAH24842"/>
    </conflict>
    <text>Intron retention.</text>
</comment>
<comment type="sequence caution" evidence="15">
    <conflict type="miscellaneous discrepancy">
        <sequence resource="EMBL-CDS" id="AAH58269"/>
    </conflict>
    <text>Intron retention.</text>
</comment>
<reference key="1">
    <citation type="journal article" date="2006" name="Mol. Endocrinol.">
        <title>Activation of the blue opsin gene in cone photoreceptor development by retinoid-related orphan receptor beta.</title>
        <authorList>
            <person name="Srinivas M."/>
            <person name="Ng L."/>
            <person name="Liu H."/>
            <person name="Jia L."/>
            <person name="Forrest D."/>
        </authorList>
    </citation>
    <scope>NUCLEOTIDE SEQUENCE [MRNA] (ISOFORMS 1 AND 2)</scope>
    <scope>FUNCTION IN CONE PHOTORECEPTOR DEVELOPMENT</scope>
    <scope>TISSUE SPECIFICITY</scope>
    <scope>DEVELOPMENTAL STAGE</scope>
    <scope>DISRUPTION PHENOTYPE</scope>
    <scope>SUBCELLULAR LOCATION</scope>
    <scope>DNA-BINDING</scope>
    <source>
        <strain>C57BL/6J</strain>
        <tissue>Embryonic eye</tissue>
    </source>
</reference>
<reference key="2">
    <citation type="submission" date="2006-04" db="EMBL/GenBank/DDBJ databases">
        <title>Mouse ROR beta partial cDNA.</title>
        <authorList>
            <person name="Takano A."/>
            <person name="Katsuyama Y."/>
        </authorList>
    </citation>
    <scope>NUCLEOTIDE SEQUENCE [MRNA] (ISOFORM 1)</scope>
    <source>
        <strain>C57BL/6J</strain>
        <tissue>Brain</tissue>
    </source>
</reference>
<reference key="3">
    <citation type="journal article" date="2004" name="Genome Res.">
        <title>The status, quality, and expansion of the NIH full-length cDNA project: the Mammalian Gene Collection (MGC).</title>
        <authorList>
            <consortium name="The MGC Project Team"/>
        </authorList>
    </citation>
    <scope>NUCLEOTIDE SEQUENCE [LARGE SCALE MRNA] (ISOFORM 2)</scope>
    <source>
        <strain>C57BL/6J</strain>
        <tissue>Retina</tissue>
    </source>
</reference>
<reference key="4">
    <citation type="journal article" date="1998" name="EMBO J.">
        <title>Disruption of retinoid-related orphan receptor beta changes circadian behavior, causes retinal degeneration and leads to vacillans phenotype in mice.</title>
        <authorList>
            <person name="Andre E."/>
            <person name="Conquet F."/>
            <person name="Steinmayr M."/>
            <person name="Stratton S.C."/>
            <person name="Porciatti V."/>
            <person name="Becker-Andre M."/>
        </authorList>
    </citation>
    <scope>FUNCTION IN CIRCADIAN RHYTHMS AND DEVELOPMENT</scope>
    <scope>DISRUPTION PHENOTYPE</scope>
    <scope>TISSUE SPECIFICITY</scope>
</reference>
<reference key="5">
    <citation type="journal article" date="2007" name="Am. J. Physiol.">
        <title>Behavioral characterization and modulation of circadian rhythms by light and melatonin in C3H/HeN mice homozygous for the RORbeta knockout.</title>
        <authorList>
            <person name="Masana M.I."/>
            <person name="Sumaya I.C."/>
            <person name="Becker-Andre M."/>
            <person name="Dubocovich M.L."/>
        </authorList>
    </citation>
    <scope>FUNCTION IN CIRCADIAN RHYTHMS</scope>
    <scope>DISRUPTION PHENOTYPE</scope>
</reference>
<reference key="6">
    <citation type="journal article" date="2009" name="Proc. Natl. Acad. Sci. U.S.A.">
        <title>Retinoid-related orphan nuclear receptor RORbeta is an early-acting factor in rod photoreceptor development.</title>
        <authorList>
            <person name="Jia L."/>
            <person name="Oh E.C."/>
            <person name="Ng L."/>
            <person name="Srinivas M."/>
            <person name="Brooks M."/>
            <person name="Swaroop A."/>
            <person name="Forrest D."/>
        </authorList>
    </citation>
    <scope>FUNCTION IN ROD DIFFERENTIATION</scope>
    <scope>DISRUPTION PHENOTYPE</scope>
</reference>
<reference key="7">
    <citation type="journal article" date="2012" name="Cereb. Cortex">
        <title>RORbeta induces barrel-like neuronal clusters in the developing neocortex.</title>
        <authorList>
            <person name="Jabaudon D."/>
            <person name="Shnider S.J."/>
            <person name="Tischfield D.J."/>
            <person name="Galazo M.J."/>
            <person name="Macklis J.D."/>
        </authorList>
    </citation>
    <scope>FUNCTION IN NEUROGENESIS</scope>
    <scope>DEVELOPMENTAL STAGE</scope>
    <scope>TISSUE SPECIFICITY</scope>
</reference>
<reference key="8">
    <citation type="journal article" date="2012" name="J. Bone Miner. Res.">
        <title>Examination of nuclear receptor expression in osteoblasts reveals Rorbeta as an important regulator of osteogenesis.</title>
        <authorList>
            <person name="Roforth M.M."/>
            <person name="Liu G."/>
            <person name="Khosla S."/>
            <person name="Monroe D.G."/>
        </authorList>
    </citation>
    <scope>FUNCTION IN OSTEOGENESIS</scope>
    <scope>TISSUE SPECIFICITY</scope>
    <scope>INDUCTION BY AGING</scope>
</reference>
<reference key="9">
    <citation type="journal article" date="2013" name="Nat. Commun.">
        <title>An isoform of retinoid-related orphan receptor beta directs differentiation of retinal amacrine and horizontal interneurons.</title>
        <authorList>
            <person name="Liu H."/>
            <person name="Kim S.Y."/>
            <person name="Fu Y."/>
            <person name="Wu X."/>
            <person name="Ng L."/>
            <person name="Swaroop A."/>
            <person name="Forrest D."/>
        </authorList>
    </citation>
    <scope>FUNCTION IN RETINA DEVELOPMENT (ISOFORM 1)</scope>
    <scope>DISRUPTION PHENOTYPE (ISOFORM 1)</scope>
    <scope>TISSUE SPECIFICITY</scope>
    <scope>DEVELOPMENTAL STAGE (ISOFORMS 1 AND 2)</scope>
</reference>
<protein>
    <recommendedName>
        <fullName>Nuclear receptor ROR-beta</fullName>
    </recommendedName>
    <alternativeName>
        <fullName>Nuclear receptor RZR-beta</fullName>
    </alternativeName>
    <alternativeName>
        <fullName>Nuclear receptor subfamily 1 group F member 2</fullName>
    </alternativeName>
    <alternativeName>
        <fullName>Retinoid-related orphan receptor-beta</fullName>
    </alternativeName>
</protein>
<name>RORB_MOUSE</name>
<sequence>MCENQPKTKADGTAQIEVIPCKICGDKSSGIHYGVITCEGCKGFFRRSQQNNASYSCPRQRNCLIDRTNRNRCQHCRLQKCLALGMSRDAVKFGRMSKKQRDSLYAEVQKHQQRLQEQRQQQSGEAEALARVYSSSISNGLSNLNTETGGTYANGHVIDLPKSEGYYSIDSGQPSPDQSGLDMTGIKQIKQEPIYDLTSVPNLFTYSSFNNGQLAPGITMSEIDRIAQNIIKSHLETCQYTMEELHQLAWQTHTYEEIKAYQSKSREALWQQCAIQITHAIQYVVEFAKRITGFMELCQNDQILLLKSGCLEVVLVRMCRAFNPLNNTVLFEGKYGGMQMFKALGSDDLVNEAFDFAKNLCSLQLTEEEIALFSSAVLISPDRAWLIEPRKVQKLQEKIYFALQHVIQKNHLDDETLAKLIAKIPTITAVCNLHGEKLQVFKQSHPDIVNTLFPPLYKELFNPDCAAVCK</sequence>
<proteinExistence type="evidence at protein level"/>